<feature type="chain" id="PRO_0000062849" description="Octanoyltransferase">
    <location>
        <begin position="1"/>
        <end position="235"/>
    </location>
</feature>
<feature type="domain" description="BPL/LPL catalytic" evidence="2">
    <location>
        <begin position="37"/>
        <end position="220"/>
    </location>
</feature>
<feature type="active site" description="Acyl-thioester intermediate" evidence="1">
    <location>
        <position position="181"/>
    </location>
</feature>
<feature type="binding site" evidence="1">
    <location>
        <begin position="78"/>
        <end position="85"/>
    </location>
    <ligand>
        <name>substrate</name>
    </ligand>
</feature>
<feature type="binding site" evidence="1">
    <location>
        <begin position="150"/>
        <end position="152"/>
    </location>
    <ligand>
        <name>substrate</name>
    </ligand>
</feature>
<feature type="binding site" evidence="1">
    <location>
        <begin position="163"/>
        <end position="165"/>
    </location>
    <ligand>
        <name>substrate</name>
    </ligand>
</feature>
<feature type="site" description="Lowers pKa of active site Cys" evidence="1">
    <location>
        <position position="147"/>
    </location>
</feature>
<protein>
    <recommendedName>
        <fullName evidence="1">Octanoyltransferase</fullName>
        <ecNumber evidence="1">2.3.1.181</ecNumber>
    </recommendedName>
    <alternativeName>
        <fullName evidence="1">Lipoate-protein ligase B</fullName>
    </alternativeName>
    <alternativeName>
        <fullName evidence="1">Lipoyl/octanoyl transferase</fullName>
    </alternativeName>
    <alternativeName>
        <fullName evidence="1">Octanoyl-[acyl-carrier-protein]-protein N-octanoyltransferase</fullName>
    </alternativeName>
</protein>
<evidence type="ECO:0000255" key="1">
    <source>
        <dbReference type="HAMAP-Rule" id="MF_00013"/>
    </source>
</evidence>
<evidence type="ECO:0000255" key="2">
    <source>
        <dbReference type="PROSITE-ProRule" id="PRU01067"/>
    </source>
</evidence>
<organism>
    <name type="scientific">Mycobacterium leprae (strain TN)</name>
    <dbReference type="NCBI Taxonomy" id="272631"/>
    <lineage>
        <taxon>Bacteria</taxon>
        <taxon>Bacillati</taxon>
        <taxon>Actinomycetota</taxon>
        <taxon>Actinomycetes</taxon>
        <taxon>Mycobacteriales</taxon>
        <taxon>Mycobacteriaceae</taxon>
        <taxon>Mycobacterium</taxon>
    </lineage>
</organism>
<name>LIPB_MYCLE</name>
<proteinExistence type="inferred from homology"/>
<sequence length="235" mass="25002">MDSIRSIPTAIDVRQLGTVDYHIAWQLQRDLADARVAGGPDTLLLLQHPPVYTAGRRTQPHERPNPSLHGVPVVETDRGGKITWHGPGQLVGYPIIGLAEPLDVVNYVRRLEEALIKVCAELGLDTSRVNGRSGIWVPGSAGQPARKIAAIGVRVSRATTMHGFALNCQCDLDAFHAIVPCGISDAGVTSLSAELGRTVAVNDVRSAIAEAVNDALDGWLALSWLSTPASVTSTL</sequence>
<dbReference type="EC" id="2.3.1.181" evidence="1"/>
<dbReference type="EMBL" id="Z98741">
    <property type="protein sequence ID" value="CAB11384.1"/>
    <property type="molecule type" value="Genomic_DNA"/>
</dbReference>
<dbReference type="EMBL" id="AL583920">
    <property type="protein sequence ID" value="CAC31240.1"/>
    <property type="molecule type" value="Genomic_DNA"/>
</dbReference>
<dbReference type="PIR" id="T44894">
    <property type="entry name" value="T44894"/>
</dbReference>
<dbReference type="RefSeq" id="NP_301647.1">
    <property type="nucleotide sequence ID" value="NC_002677.1"/>
</dbReference>
<dbReference type="SMR" id="O32961"/>
<dbReference type="STRING" id="272631.gene:17574685"/>
<dbReference type="KEGG" id="mle:ML0859"/>
<dbReference type="PATRIC" id="fig|272631.5.peg.1585"/>
<dbReference type="Leproma" id="ML0859"/>
<dbReference type="eggNOG" id="COG0321">
    <property type="taxonomic scope" value="Bacteria"/>
</dbReference>
<dbReference type="HOGENOM" id="CLU_035168_2_1_11"/>
<dbReference type="OrthoDB" id="9787061at2"/>
<dbReference type="UniPathway" id="UPA00538">
    <property type="reaction ID" value="UER00592"/>
</dbReference>
<dbReference type="Proteomes" id="UP000000806">
    <property type="component" value="Chromosome"/>
</dbReference>
<dbReference type="GO" id="GO:0005737">
    <property type="term" value="C:cytoplasm"/>
    <property type="evidence" value="ECO:0007669"/>
    <property type="project" value="UniProtKB-SubCell"/>
</dbReference>
<dbReference type="GO" id="GO:0033819">
    <property type="term" value="F:lipoyl(octanoyl) transferase activity"/>
    <property type="evidence" value="ECO:0007669"/>
    <property type="project" value="UniProtKB-EC"/>
</dbReference>
<dbReference type="GO" id="GO:0036211">
    <property type="term" value="P:protein modification process"/>
    <property type="evidence" value="ECO:0007669"/>
    <property type="project" value="InterPro"/>
</dbReference>
<dbReference type="CDD" id="cd16444">
    <property type="entry name" value="LipB"/>
    <property type="match status" value="1"/>
</dbReference>
<dbReference type="FunFam" id="3.30.930.10:FF:000035">
    <property type="entry name" value="Putative lipoyltransferase 2, mitochondrial"/>
    <property type="match status" value="1"/>
</dbReference>
<dbReference type="Gene3D" id="3.30.930.10">
    <property type="entry name" value="Bira Bifunctional Protein, Domain 2"/>
    <property type="match status" value="1"/>
</dbReference>
<dbReference type="HAMAP" id="MF_00013">
    <property type="entry name" value="LipB"/>
    <property type="match status" value="1"/>
</dbReference>
<dbReference type="InterPro" id="IPR045864">
    <property type="entry name" value="aa-tRNA-synth_II/BPL/LPL"/>
</dbReference>
<dbReference type="InterPro" id="IPR004143">
    <property type="entry name" value="BPL_LPL_catalytic"/>
</dbReference>
<dbReference type="InterPro" id="IPR000544">
    <property type="entry name" value="Octanoyltransferase"/>
</dbReference>
<dbReference type="InterPro" id="IPR020605">
    <property type="entry name" value="Octanoyltransferase_CS"/>
</dbReference>
<dbReference type="NCBIfam" id="TIGR00214">
    <property type="entry name" value="lipB"/>
    <property type="match status" value="1"/>
</dbReference>
<dbReference type="NCBIfam" id="NF010925">
    <property type="entry name" value="PRK14345.1"/>
    <property type="match status" value="1"/>
</dbReference>
<dbReference type="PANTHER" id="PTHR10993:SF7">
    <property type="entry name" value="LIPOYLTRANSFERASE 2, MITOCHONDRIAL-RELATED"/>
    <property type="match status" value="1"/>
</dbReference>
<dbReference type="PANTHER" id="PTHR10993">
    <property type="entry name" value="OCTANOYLTRANSFERASE"/>
    <property type="match status" value="1"/>
</dbReference>
<dbReference type="Pfam" id="PF21948">
    <property type="entry name" value="LplA-B_cat"/>
    <property type="match status" value="1"/>
</dbReference>
<dbReference type="PIRSF" id="PIRSF016262">
    <property type="entry name" value="LPLase"/>
    <property type="match status" value="1"/>
</dbReference>
<dbReference type="SUPFAM" id="SSF55681">
    <property type="entry name" value="Class II aaRS and biotin synthetases"/>
    <property type="match status" value="1"/>
</dbReference>
<dbReference type="PROSITE" id="PS51733">
    <property type="entry name" value="BPL_LPL_CATALYTIC"/>
    <property type="match status" value="1"/>
</dbReference>
<dbReference type="PROSITE" id="PS01313">
    <property type="entry name" value="LIPB"/>
    <property type="match status" value="1"/>
</dbReference>
<comment type="function">
    <text evidence="1">Catalyzes the transfer of endogenously produced octanoic acid from octanoyl-acyl-carrier-protein onto the lipoyl domains of lipoate-dependent enzymes. Lipoyl-ACP can also act as a substrate although octanoyl-ACP is likely to be the physiological substrate.</text>
</comment>
<comment type="catalytic activity">
    <reaction evidence="1">
        <text>octanoyl-[ACP] + L-lysyl-[protein] = N(6)-octanoyl-L-lysyl-[protein] + holo-[ACP] + H(+)</text>
        <dbReference type="Rhea" id="RHEA:17665"/>
        <dbReference type="Rhea" id="RHEA-COMP:9636"/>
        <dbReference type="Rhea" id="RHEA-COMP:9685"/>
        <dbReference type="Rhea" id="RHEA-COMP:9752"/>
        <dbReference type="Rhea" id="RHEA-COMP:9928"/>
        <dbReference type="ChEBI" id="CHEBI:15378"/>
        <dbReference type="ChEBI" id="CHEBI:29969"/>
        <dbReference type="ChEBI" id="CHEBI:64479"/>
        <dbReference type="ChEBI" id="CHEBI:78463"/>
        <dbReference type="ChEBI" id="CHEBI:78809"/>
        <dbReference type="EC" id="2.3.1.181"/>
    </reaction>
</comment>
<comment type="pathway">
    <text evidence="1">Protein modification; protein lipoylation via endogenous pathway; protein N(6)-(lipoyl)lysine from octanoyl-[acyl-carrier-protein]: step 1/2.</text>
</comment>
<comment type="subcellular location">
    <subcellularLocation>
        <location evidence="1">Cytoplasm</location>
    </subcellularLocation>
</comment>
<comment type="miscellaneous">
    <text evidence="1">In the reaction, the free carboxyl group of octanoic acid is attached via an amide linkage to the epsilon-amino group of a specific lysine residue of lipoyl domains of lipoate-dependent enzymes.</text>
</comment>
<comment type="similarity">
    <text evidence="1">Belongs to the LipB family.</text>
</comment>
<reference key="1">
    <citation type="journal article" date="2001" name="Nature">
        <title>Massive gene decay in the leprosy bacillus.</title>
        <authorList>
            <person name="Cole S.T."/>
            <person name="Eiglmeier K."/>
            <person name="Parkhill J."/>
            <person name="James K.D."/>
            <person name="Thomson N.R."/>
            <person name="Wheeler P.R."/>
            <person name="Honore N."/>
            <person name="Garnier T."/>
            <person name="Churcher C.M."/>
            <person name="Harris D.E."/>
            <person name="Mungall K.L."/>
            <person name="Basham D."/>
            <person name="Brown D."/>
            <person name="Chillingworth T."/>
            <person name="Connor R."/>
            <person name="Davies R.M."/>
            <person name="Devlin K."/>
            <person name="Duthoy S."/>
            <person name="Feltwell T."/>
            <person name="Fraser A."/>
            <person name="Hamlin N."/>
            <person name="Holroyd S."/>
            <person name="Hornsby T."/>
            <person name="Jagels K."/>
            <person name="Lacroix C."/>
            <person name="Maclean J."/>
            <person name="Moule S."/>
            <person name="Murphy L.D."/>
            <person name="Oliver K."/>
            <person name="Quail M.A."/>
            <person name="Rajandream M.A."/>
            <person name="Rutherford K.M."/>
            <person name="Rutter S."/>
            <person name="Seeger K."/>
            <person name="Simon S."/>
            <person name="Simmonds M."/>
            <person name="Skelton J."/>
            <person name="Squares R."/>
            <person name="Squares S."/>
            <person name="Stevens K."/>
            <person name="Taylor K."/>
            <person name="Whitehead S."/>
            <person name="Woodward J.R."/>
            <person name="Barrell B.G."/>
        </authorList>
    </citation>
    <scope>NUCLEOTIDE SEQUENCE [LARGE SCALE GENOMIC DNA]</scope>
    <source>
        <strain>TN</strain>
    </source>
</reference>
<keyword id="KW-0012">Acyltransferase</keyword>
<keyword id="KW-0963">Cytoplasm</keyword>
<keyword id="KW-1185">Reference proteome</keyword>
<keyword id="KW-0808">Transferase</keyword>
<gene>
    <name evidence="1" type="primary">lipB</name>
    <name type="ordered locus">ML0859</name>
    <name type="ORF">MLCB22.19</name>
</gene>
<accession>O32961</accession>